<feature type="chain" id="PRO_1000014810" description="Large ribosomal subunit protein bL9">
    <location>
        <begin position="1"/>
        <end position="152"/>
    </location>
</feature>
<organism>
    <name type="scientific">Mycobacterium bovis (strain BCG / Pasteur 1173P2)</name>
    <dbReference type="NCBI Taxonomy" id="410289"/>
    <lineage>
        <taxon>Bacteria</taxon>
        <taxon>Bacillati</taxon>
        <taxon>Actinomycetota</taxon>
        <taxon>Actinomycetes</taxon>
        <taxon>Mycobacteriales</taxon>
        <taxon>Mycobacteriaceae</taxon>
        <taxon>Mycobacterium</taxon>
        <taxon>Mycobacterium tuberculosis complex</taxon>
    </lineage>
</organism>
<sequence>MKLILTADVDHLGSIGDTVEVKDGYGRNFLLPRGLAIVASRGAQKQADEIRRARETKSVRDLEHANEIKAAIEALGPIALPVKTSADSGKLFGSVTAADVVAAIKKAGGPNLDKRIVRLPKTHIKAVGTHFVSVHLHPEIDVEVSLDVVAQS</sequence>
<name>RL9_MYCBP</name>
<dbReference type="EMBL" id="AM408590">
    <property type="protein sequence ID" value="CAL70071.1"/>
    <property type="molecule type" value="Genomic_DNA"/>
</dbReference>
<dbReference type="RefSeq" id="WP_003400543.1">
    <property type="nucleotide sequence ID" value="NC_008769.1"/>
</dbReference>
<dbReference type="SMR" id="A1KEM4"/>
<dbReference type="GeneID" id="45424015"/>
<dbReference type="KEGG" id="mbb:BCG_0087"/>
<dbReference type="HOGENOM" id="CLU_078938_5_1_11"/>
<dbReference type="Proteomes" id="UP000001472">
    <property type="component" value="Chromosome"/>
</dbReference>
<dbReference type="GO" id="GO:1990904">
    <property type="term" value="C:ribonucleoprotein complex"/>
    <property type="evidence" value="ECO:0007669"/>
    <property type="project" value="UniProtKB-KW"/>
</dbReference>
<dbReference type="GO" id="GO:0005840">
    <property type="term" value="C:ribosome"/>
    <property type="evidence" value="ECO:0007669"/>
    <property type="project" value="UniProtKB-KW"/>
</dbReference>
<dbReference type="GO" id="GO:0019843">
    <property type="term" value="F:rRNA binding"/>
    <property type="evidence" value="ECO:0007669"/>
    <property type="project" value="UniProtKB-UniRule"/>
</dbReference>
<dbReference type="GO" id="GO:0003735">
    <property type="term" value="F:structural constituent of ribosome"/>
    <property type="evidence" value="ECO:0007669"/>
    <property type="project" value="InterPro"/>
</dbReference>
<dbReference type="GO" id="GO:0006412">
    <property type="term" value="P:translation"/>
    <property type="evidence" value="ECO:0007669"/>
    <property type="project" value="UniProtKB-UniRule"/>
</dbReference>
<dbReference type="FunFam" id="3.10.430.100:FF:000006">
    <property type="entry name" value="50S ribosomal protein L9"/>
    <property type="match status" value="1"/>
</dbReference>
<dbReference type="FunFam" id="3.40.5.10:FF:000003">
    <property type="entry name" value="50S ribosomal protein L9"/>
    <property type="match status" value="1"/>
</dbReference>
<dbReference type="Gene3D" id="3.10.430.100">
    <property type="entry name" value="Ribosomal protein L9, C-terminal domain"/>
    <property type="match status" value="1"/>
</dbReference>
<dbReference type="Gene3D" id="3.40.5.10">
    <property type="entry name" value="Ribosomal protein L9, N-terminal domain"/>
    <property type="match status" value="1"/>
</dbReference>
<dbReference type="HAMAP" id="MF_00503">
    <property type="entry name" value="Ribosomal_bL9"/>
    <property type="match status" value="1"/>
</dbReference>
<dbReference type="InterPro" id="IPR000244">
    <property type="entry name" value="Ribosomal_bL9"/>
</dbReference>
<dbReference type="InterPro" id="IPR009027">
    <property type="entry name" value="Ribosomal_bL9/RNase_H1_N"/>
</dbReference>
<dbReference type="InterPro" id="IPR020594">
    <property type="entry name" value="Ribosomal_bL9_bac/chp"/>
</dbReference>
<dbReference type="InterPro" id="IPR020069">
    <property type="entry name" value="Ribosomal_bL9_C"/>
</dbReference>
<dbReference type="InterPro" id="IPR036791">
    <property type="entry name" value="Ribosomal_bL9_C_sf"/>
</dbReference>
<dbReference type="InterPro" id="IPR020070">
    <property type="entry name" value="Ribosomal_bL9_N"/>
</dbReference>
<dbReference type="InterPro" id="IPR036935">
    <property type="entry name" value="Ribosomal_bL9_N_sf"/>
</dbReference>
<dbReference type="NCBIfam" id="TIGR00158">
    <property type="entry name" value="L9"/>
    <property type="match status" value="1"/>
</dbReference>
<dbReference type="PANTHER" id="PTHR21368">
    <property type="entry name" value="50S RIBOSOMAL PROTEIN L9"/>
    <property type="match status" value="1"/>
</dbReference>
<dbReference type="Pfam" id="PF03948">
    <property type="entry name" value="Ribosomal_L9_C"/>
    <property type="match status" value="1"/>
</dbReference>
<dbReference type="Pfam" id="PF01281">
    <property type="entry name" value="Ribosomal_L9_N"/>
    <property type="match status" value="1"/>
</dbReference>
<dbReference type="SUPFAM" id="SSF55658">
    <property type="entry name" value="L9 N-domain-like"/>
    <property type="match status" value="1"/>
</dbReference>
<dbReference type="SUPFAM" id="SSF55653">
    <property type="entry name" value="Ribosomal protein L9 C-domain"/>
    <property type="match status" value="1"/>
</dbReference>
<dbReference type="PROSITE" id="PS00651">
    <property type="entry name" value="RIBOSOMAL_L9"/>
    <property type="match status" value="1"/>
</dbReference>
<proteinExistence type="inferred from homology"/>
<evidence type="ECO:0000255" key="1">
    <source>
        <dbReference type="HAMAP-Rule" id="MF_00503"/>
    </source>
</evidence>
<evidence type="ECO:0000305" key="2"/>
<gene>
    <name evidence="1" type="primary">rplI</name>
    <name type="ordered locus">BCG_0087</name>
</gene>
<reference key="1">
    <citation type="journal article" date="2007" name="Proc. Natl. Acad. Sci. U.S.A.">
        <title>Genome plasticity of BCG and impact on vaccine efficacy.</title>
        <authorList>
            <person name="Brosch R."/>
            <person name="Gordon S.V."/>
            <person name="Garnier T."/>
            <person name="Eiglmeier K."/>
            <person name="Frigui W."/>
            <person name="Valenti P."/>
            <person name="Dos Santos S."/>
            <person name="Duthoy S."/>
            <person name="Lacroix C."/>
            <person name="Garcia-Pelayo C."/>
            <person name="Inwald J.K."/>
            <person name="Golby P."/>
            <person name="Garcia J.N."/>
            <person name="Hewinson R.G."/>
            <person name="Behr M.A."/>
            <person name="Quail M.A."/>
            <person name="Churcher C."/>
            <person name="Barrell B.G."/>
            <person name="Parkhill J."/>
            <person name="Cole S.T."/>
        </authorList>
    </citation>
    <scope>NUCLEOTIDE SEQUENCE [LARGE SCALE GENOMIC DNA]</scope>
    <source>
        <strain>BCG / Pasteur 1173P2</strain>
    </source>
</reference>
<keyword id="KW-0687">Ribonucleoprotein</keyword>
<keyword id="KW-0689">Ribosomal protein</keyword>
<keyword id="KW-0694">RNA-binding</keyword>
<keyword id="KW-0699">rRNA-binding</keyword>
<accession>A1KEM4</accession>
<comment type="function">
    <text evidence="1">Binds to the 23S rRNA.</text>
</comment>
<comment type="similarity">
    <text evidence="1">Belongs to the bacterial ribosomal protein bL9 family.</text>
</comment>
<protein>
    <recommendedName>
        <fullName evidence="1">Large ribosomal subunit protein bL9</fullName>
    </recommendedName>
    <alternativeName>
        <fullName evidence="2">50S ribosomal protein L9</fullName>
    </alternativeName>
</protein>